<feature type="chain" id="PRO_0000130314" description="Small ribosomal subunit protein uS3m">
    <location>
        <begin position="1"/>
        <end position="430"/>
    </location>
</feature>
<dbReference type="EMBL" id="M68929">
    <property type="protein sequence ID" value="AAC09417.1"/>
    <property type="molecule type" value="Genomic_DNA"/>
</dbReference>
<dbReference type="PIR" id="S25977">
    <property type="entry name" value="S25977"/>
</dbReference>
<dbReference type="RefSeq" id="NP_054420.1">
    <property type="nucleotide sequence ID" value="NC_001660.1"/>
</dbReference>
<dbReference type="SMR" id="P26865"/>
<dbReference type="GeneID" id="2702469"/>
<dbReference type="GO" id="GO:0005739">
    <property type="term" value="C:mitochondrion"/>
    <property type="evidence" value="ECO:0007669"/>
    <property type="project" value="UniProtKB-SubCell"/>
</dbReference>
<dbReference type="GO" id="GO:1990904">
    <property type="term" value="C:ribonucleoprotein complex"/>
    <property type="evidence" value="ECO:0007669"/>
    <property type="project" value="UniProtKB-KW"/>
</dbReference>
<dbReference type="GO" id="GO:0005840">
    <property type="term" value="C:ribosome"/>
    <property type="evidence" value="ECO:0007669"/>
    <property type="project" value="UniProtKB-KW"/>
</dbReference>
<dbReference type="GO" id="GO:0003723">
    <property type="term" value="F:RNA binding"/>
    <property type="evidence" value="ECO:0007669"/>
    <property type="project" value="InterPro"/>
</dbReference>
<dbReference type="GO" id="GO:0003735">
    <property type="term" value="F:structural constituent of ribosome"/>
    <property type="evidence" value="ECO:0007669"/>
    <property type="project" value="InterPro"/>
</dbReference>
<dbReference type="GO" id="GO:0006412">
    <property type="term" value="P:translation"/>
    <property type="evidence" value="ECO:0007669"/>
    <property type="project" value="InterPro"/>
</dbReference>
<dbReference type="Gene3D" id="3.30.1140.32">
    <property type="entry name" value="Ribosomal protein S3, C-terminal domain"/>
    <property type="match status" value="1"/>
</dbReference>
<dbReference type="InterPro" id="IPR009019">
    <property type="entry name" value="KH_sf_prok-type"/>
</dbReference>
<dbReference type="InterPro" id="IPR036419">
    <property type="entry name" value="Ribosomal_S3_C_sf"/>
</dbReference>
<dbReference type="InterPro" id="IPR001351">
    <property type="entry name" value="Ribosomal_uS3_C"/>
</dbReference>
<dbReference type="InterPro" id="IPR018280">
    <property type="entry name" value="Ribosomal_uS3_CS"/>
</dbReference>
<dbReference type="InterPro" id="IPR044954">
    <property type="entry name" value="Ribosomal_uS3m_plant"/>
</dbReference>
<dbReference type="PANTHER" id="PTHR35928">
    <property type="entry name" value="RIBOSOMAL PROTEIN S3, MITOCHONDRIAL"/>
    <property type="match status" value="1"/>
</dbReference>
<dbReference type="PANTHER" id="PTHR35928:SF2">
    <property type="entry name" value="SMALL RIBOSOMAL SUBUNIT PROTEIN US3M"/>
    <property type="match status" value="1"/>
</dbReference>
<dbReference type="Pfam" id="PF00189">
    <property type="entry name" value="Ribosomal_S3_C"/>
    <property type="match status" value="1"/>
</dbReference>
<dbReference type="SUPFAM" id="SSF54814">
    <property type="entry name" value="Prokaryotic type KH domain (KH-domain type II)"/>
    <property type="match status" value="1"/>
</dbReference>
<dbReference type="SUPFAM" id="SSF54821">
    <property type="entry name" value="Ribosomal protein S3 C-terminal domain"/>
    <property type="match status" value="1"/>
</dbReference>
<dbReference type="PROSITE" id="PS00548">
    <property type="entry name" value="RIBOSOMAL_S3"/>
    <property type="match status" value="1"/>
</dbReference>
<keyword id="KW-0496">Mitochondrion</keyword>
<keyword id="KW-0687">Ribonucleoprotein</keyword>
<keyword id="KW-0689">Ribosomal protein</keyword>
<reference key="1">
    <citation type="journal article" date="1992" name="J. Mol. Biol.">
        <title>Gene organization deduced from the complete sequence of liverwort Marchantia polymorpha mitochondrial DNA. A primitive form of plant mitochondrial genome.</title>
        <authorList>
            <person name="Oda K."/>
            <person name="Yamato K."/>
            <person name="Ohta E."/>
            <person name="Nakamura Y."/>
            <person name="Takemura M."/>
            <person name="Nozato N."/>
            <person name="Akashi K."/>
            <person name="Kanegae T."/>
            <person name="Ogura Y."/>
            <person name="Kohchi T."/>
            <person name="Ohyama K."/>
        </authorList>
    </citation>
    <scope>NUCLEOTIDE SEQUENCE [GENOMIC DNA]</scope>
</reference>
<reference key="2">
    <citation type="journal article" date="1992" name="Nucleic Acids Res.">
        <title>Gene clusters for ribosomal proteins in the mitochondrial genome of a liverwort, Marchantia polymorpha.</title>
        <authorList>
            <person name="Takemura M."/>
            <person name="Oda K."/>
            <person name="Yamato K."/>
            <person name="Ohta E."/>
            <person name="Nakamura Y."/>
            <person name="Nozato N."/>
            <person name="Akashi K."/>
            <person name="Ohyama K."/>
        </authorList>
    </citation>
    <scope>NUCLEOTIDE SEQUENCE [GENOMIC DNA]</scope>
</reference>
<evidence type="ECO:0000305" key="1"/>
<gene>
    <name type="primary">RPS3</name>
</gene>
<geneLocation type="mitochondrion"/>
<accession>P26865</accession>
<proteinExistence type="inferred from homology"/>
<sequence length="430" mass="49676">MAQKVNPISVRLNLNRSSDSSWFSDYYYGKLLYQDLNFRDYFGSIRPPTGNTFGFRLGRCIIHHFPKRTFIHVFFLDRLSQSRHQGLGAIPSVKLIRRINDNTVKQRNEVGIWPKKRYEYHDRLPSIQKIDQLLRVSDWMADIHSTFQSIWPKDENDDRRASEERYAFSRFAPSILVAVRAEKKKAIFGSEGDFFGFTGRAFLDYFVMQYFFNLKNQIQFDPMVNRSPVAQGVAKTSMIGKAIPAKTEQGTQSGESICQPRSTLYFDAIIFLRYARFRKATSLSSRYYYLKKMQSLFSNQTKTNTLIQPVKIASVYQSASLIAQEISWKLEQKKSFRQICRSIFKQIKKCPYVKGIRIGCSGRLNGAEIAKTECKKYGETSLHVFSDQIDYAKTQASTPYGILGVKVWVSYFLTQKKGTSCAISKTYKIS</sequence>
<comment type="subcellular location">
    <subcellularLocation>
        <location>Mitochondrion</location>
    </subcellularLocation>
</comment>
<comment type="similarity">
    <text evidence="1">Belongs to the universal ribosomal protein uS3 family.</text>
</comment>
<protein>
    <recommendedName>
        <fullName evidence="1">Small ribosomal subunit protein uS3m</fullName>
    </recommendedName>
    <alternativeName>
        <fullName>Ribosomal protein S3, mitochondrial</fullName>
    </alternativeName>
</protein>
<organism>
    <name type="scientific">Marchantia polymorpha</name>
    <name type="common">Common liverwort</name>
    <name type="synonym">Marchantia aquatica</name>
    <dbReference type="NCBI Taxonomy" id="3197"/>
    <lineage>
        <taxon>Eukaryota</taxon>
        <taxon>Viridiplantae</taxon>
        <taxon>Streptophyta</taxon>
        <taxon>Embryophyta</taxon>
        <taxon>Marchantiophyta</taxon>
        <taxon>Marchantiopsida</taxon>
        <taxon>Marchantiidae</taxon>
        <taxon>Marchantiales</taxon>
        <taxon>Marchantiaceae</taxon>
        <taxon>Marchantia</taxon>
    </lineage>
</organism>
<name>RT03_MARPO</name>